<sequence length="306" mass="34856">MPRDRLKELQEKATVNTIHAYNYDPPARKYDVESQPLINQDADFEMFLERCSNIRGGLKSLEEDYDAVVQLHGALLSTPGADSENSNKLKSHNQMFFSKAEQIKNSLKILSEETSRIPTTACGIMRAKSDQVKSIYKTFENIMLNFNREQDEYKEKAKRKIVDYLKIRNMQLSDEEIENAVSSGNLSEVTKGVMLALNEKKALYDEVKSRADELKNLERQMGELAQMFHDLHIMVVSQAKMVDSIVNSVENATEYAKQARGNVEEARNLQKRARKMKVCIIIGSIIAVLILILFIQSAVCHFTPIC</sequence>
<reference key="1">
    <citation type="journal article" date="1998" name="Science">
        <title>Genome sequence of the nematode C. elegans: a platform for investigating biology.</title>
        <authorList>
            <consortium name="The C. elegans sequencing consortium"/>
        </authorList>
    </citation>
    <scope>NUCLEOTIDE SEQUENCE [LARGE SCALE GENOMIC DNA]</scope>
    <source>
        <strain>Bristol N2</strain>
    </source>
</reference>
<reference key="2">
    <citation type="journal article" date="2009" name="Biochem. Biophys. Res. Commun.">
        <title>The non-neuronal syntaxin SYN-1 regulates defecation behavior and neural activity in C. elegans through interaction with the Munc13-like protein AEX-1.</title>
        <authorList>
            <person name="Yamashita M."/>
            <person name="Iwasaki K."/>
            <person name="Doi M."/>
        </authorList>
    </citation>
    <scope>FUNCTION</scope>
    <scope>SUBCELLULAR LOCATION</scope>
    <scope>TISSUE SPECIFICITY</scope>
    <scope>REGION</scope>
    <scope>MUTAGENESIS OF GLY-123 AND 177-ILE-GLU-178</scope>
</reference>
<evidence type="ECO:0000250" key="1">
    <source>
        <dbReference type="UniProtKB" id="P32851"/>
    </source>
</evidence>
<evidence type="ECO:0000255" key="2"/>
<evidence type="ECO:0000255" key="3">
    <source>
        <dbReference type="PROSITE-ProRule" id="PRU00202"/>
    </source>
</evidence>
<evidence type="ECO:0000269" key="4">
    <source>
    </source>
</evidence>
<evidence type="ECO:0000305" key="5"/>
<evidence type="ECO:0000312" key="6">
    <source>
        <dbReference type="WormBase" id="F35C8.4"/>
    </source>
</evidence>
<protein>
    <recommendedName>
        <fullName>Putative syntaxin-3</fullName>
    </recommendedName>
</protein>
<comment type="function">
    <text evidence="1 4">Potentially involved in docking of synaptic vesicles at presynaptic active zones (By similarity). Acts in the intestine to regulate anterior body muscle contractions (aBOC) and the expulsion steps during the defecation motor program (DMP).</text>
</comment>
<comment type="subcellular location">
    <subcellularLocation>
        <location evidence="4">Cell membrane</location>
        <topology evidence="5">Single-pass type IV membrane protein</topology>
    </subcellularLocation>
</comment>
<comment type="tissue specificity">
    <text evidence="4">Expressed in body wall, pharyngeal, vulval and enteric muscles and in some head neurons.</text>
</comment>
<comment type="similarity">
    <text evidence="5">Belongs to the syntaxin family.</text>
</comment>
<organism>
    <name type="scientific">Caenorhabditis elegans</name>
    <dbReference type="NCBI Taxonomy" id="6239"/>
    <lineage>
        <taxon>Eukaryota</taxon>
        <taxon>Metazoa</taxon>
        <taxon>Ecdysozoa</taxon>
        <taxon>Nematoda</taxon>
        <taxon>Chromadorea</taxon>
        <taxon>Rhabditida</taxon>
        <taxon>Rhabditina</taxon>
        <taxon>Rhabditomorpha</taxon>
        <taxon>Rhabditoidea</taxon>
        <taxon>Rhabditidae</taxon>
        <taxon>Peloderinae</taxon>
        <taxon>Caenorhabditis</taxon>
    </lineage>
</organism>
<dbReference type="EMBL" id="BX284606">
    <property type="protein sequence ID" value="CCD62783.2"/>
    <property type="molecule type" value="Genomic_DNA"/>
</dbReference>
<dbReference type="PIR" id="T16252">
    <property type="entry name" value="T16252"/>
</dbReference>
<dbReference type="RefSeq" id="NP_001359828.1">
    <property type="nucleotide sequence ID" value="NM_001373297.3"/>
</dbReference>
<dbReference type="RefSeq" id="NP_508909.2">
    <property type="nucleotide sequence ID" value="NM_076508.5"/>
</dbReference>
<dbReference type="SMR" id="Q20024"/>
<dbReference type="BioGRID" id="533189">
    <property type="interactions" value="3"/>
</dbReference>
<dbReference type="FunCoup" id="Q20024">
    <property type="interactions" value="3"/>
</dbReference>
<dbReference type="STRING" id="6239.F35C8.4.1"/>
<dbReference type="PaxDb" id="6239-F35C8.4"/>
<dbReference type="PeptideAtlas" id="Q20024"/>
<dbReference type="EnsemblMetazoa" id="F35C8.4.1">
    <property type="protein sequence ID" value="F35C8.4.1"/>
    <property type="gene ID" value="WBGene00006371"/>
</dbReference>
<dbReference type="GeneID" id="3565871"/>
<dbReference type="UCSC" id="F35C8.4.2">
    <property type="organism name" value="c. elegans"/>
</dbReference>
<dbReference type="AGR" id="WB:WBGene00006371"/>
<dbReference type="WormBase" id="F35C8.4">
    <property type="protein sequence ID" value="CE29788"/>
    <property type="gene ID" value="WBGene00006371"/>
    <property type="gene designation" value="syx-3"/>
</dbReference>
<dbReference type="eggNOG" id="KOG0810">
    <property type="taxonomic scope" value="Eukaryota"/>
</dbReference>
<dbReference type="GeneTree" id="ENSGT01000000214440"/>
<dbReference type="HOGENOM" id="CLU_042423_0_2_1"/>
<dbReference type="InParanoid" id="Q20024"/>
<dbReference type="OrthoDB" id="249087at2759"/>
<dbReference type="PhylomeDB" id="Q20024"/>
<dbReference type="PRO" id="PR:Q20024"/>
<dbReference type="Proteomes" id="UP000001940">
    <property type="component" value="Chromosome X"/>
</dbReference>
<dbReference type="Bgee" id="WBGene00006371">
    <property type="expression patterns" value="Expressed in embryo and 3 other cell types or tissues"/>
</dbReference>
<dbReference type="GO" id="GO:0012505">
    <property type="term" value="C:endomembrane system"/>
    <property type="evidence" value="ECO:0000318"/>
    <property type="project" value="GO_Central"/>
</dbReference>
<dbReference type="GO" id="GO:0005886">
    <property type="term" value="C:plasma membrane"/>
    <property type="evidence" value="ECO:0000314"/>
    <property type="project" value="UniProtKB"/>
</dbReference>
<dbReference type="GO" id="GO:0098793">
    <property type="term" value="C:presynapse"/>
    <property type="evidence" value="ECO:0007669"/>
    <property type="project" value="GOC"/>
</dbReference>
<dbReference type="GO" id="GO:0031201">
    <property type="term" value="C:SNARE complex"/>
    <property type="evidence" value="ECO:0000318"/>
    <property type="project" value="GO_Central"/>
</dbReference>
<dbReference type="GO" id="GO:0005484">
    <property type="term" value="F:SNAP receptor activity"/>
    <property type="evidence" value="ECO:0000318"/>
    <property type="project" value="GO_Central"/>
</dbReference>
<dbReference type="GO" id="GO:0000149">
    <property type="term" value="F:SNARE binding"/>
    <property type="evidence" value="ECO:0000318"/>
    <property type="project" value="GO_Central"/>
</dbReference>
<dbReference type="GO" id="GO:0006887">
    <property type="term" value="P:exocytosis"/>
    <property type="evidence" value="ECO:0000318"/>
    <property type="project" value="GO_Central"/>
</dbReference>
<dbReference type="GO" id="GO:0006886">
    <property type="term" value="P:intracellular protein transport"/>
    <property type="evidence" value="ECO:0000318"/>
    <property type="project" value="GO_Central"/>
</dbReference>
<dbReference type="GO" id="GO:0061025">
    <property type="term" value="P:membrane fusion"/>
    <property type="evidence" value="ECO:0000250"/>
    <property type="project" value="WormBase"/>
</dbReference>
<dbReference type="GO" id="GO:2000294">
    <property type="term" value="P:positive regulation of defecation"/>
    <property type="evidence" value="ECO:0000315"/>
    <property type="project" value="UniProtKB"/>
</dbReference>
<dbReference type="GO" id="GO:0006937">
    <property type="term" value="P:regulation of muscle contraction"/>
    <property type="evidence" value="ECO:0000316"/>
    <property type="project" value="UniProtKB"/>
</dbReference>
<dbReference type="GO" id="GO:0016081">
    <property type="term" value="P:synaptic vesicle docking"/>
    <property type="evidence" value="ECO:0000250"/>
    <property type="project" value="UniProtKB"/>
</dbReference>
<dbReference type="GO" id="GO:0048278">
    <property type="term" value="P:vesicle docking"/>
    <property type="evidence" value="ECO:0000318"/>
    <property type="project" value="GO_Central"/>
</dbReference>
<dbReference type="GO" id="GO:0006906">
    <property type="term" value="P:vesicle fusion"/>
    <property type="evidence" value="ECO:0000318"/>
    <property type="project" value="GO_Central"/>
</dbReference>
<dbReference type="CDD" id="cd00179">
    <property type="entry name" value="SynN"/>
    <property type="match status" value="1"/>
</dbReference>
<dbReference type="FunFam" id="1.20.58.70:FF:000027">
    <property type="entry name" value="Putative syntaxin-3"/>
    <property type="match status" value="1"/>
</dbReference>
<dbReference type="Gene3D" id="1.20.5.110">
    <property type="match status" value="1"/>
</dbReference>
<dbReference type="Gene3D" id="1.20.58.70">
    <property type="match status" value="1"/>
</dbReference>
<dbReference type="InterPro" id="IPR010989">
    <property type="entry name" value="SNARE"/>
</dbReference>
<dbReference type="InterPro" id="IPR045242">
    <property type="entry name" value="Syntaxin"/>
</dbReference>
<dbReference type="InterPro" id="IPR006012">
    <property type="entry name" value="Syntaxin/epimorphin_CS"/>
</dbReference>
<dbReference type="InterPro" id="IPR006011">
    <property type="entry name" value="Syntaxin_N"/>
</dbReference>
<dbReference type="InterPro" id="IPR000727">
    <property type="entry name" value="T_SNARE_dom"/>
</dbReference>
<dbReference type="PANTHER" id="PTHR19957">
    <property type="entry name" value="SYNTAXIN"/>
    <property type="match status" value="1"/>
</dbReference>
<dbReference type="PANTHER" id="PTHR19957:SF408">
    <property type="entry name" value="SYNTAXIN-3-RELATED"/>
    <property type="match status" value="1"/>
</dbReference>
<dbReference type="Pfam" id="PF05739">
    <property type="entry name" value="SNARE"/>
    <property type="match status" value="1"/>
</dbReference>
<dbReference type="Pfam" id="PF00804">
    <property type="entry name" value="Syntaxin"/>
    <property type="match status" value="1"/>
</dbReference>
<dbReference type="SMART" id="SM00503">
    <property type="entry name" value="SynN"/>
    <property type="match status" value="1"/>
</dbReference>
<dbReference type="SMART" id="SM00397">
    <property type="entry name" value="t_SNARE"/>
    <property type="match status" value="1"/>
</dbReference>
<dbReference type="SUPFAM" id="SSF47661">
    <property type="entry name" value="t-snare proteins"/>
    <property type="match status" value="1"/>
</dbReference>
<dbReference type="PROSITE" id="PS00914">
    <property type="entry name" value="SYNTAXIN"/>
    <property type="match status" value="1"/>
</dbReference>
<dbReference type="PROSITE" id="PS50192">
    <property type="entry name" value="T_SNARE"/>
    <property type="match status" value="1"/>
</dbReference>
<proteinExistence type="evidence at protein level"/>
<feature type="chain" id="PRO_0000210239" description="Putative syntaxin-3">
    <location>
        <begin position="1"/>
        <end position="306"/>
    </location>
</feature>
<feature type="topological domain" description="Cytoplasmic" evidence="2">
    <location>
        <begin position="1"/>
        <end position="279"/>
    </location>
</feature>
<feature type="transmembrane region" description="Helical; Anchor for type IV membrane protein" evidence="2">
    <location>
        <begin position="280"/>
        <end position="300"/>
    </location>
</feature>
<feature type="topological domain" description="Extracellular" evidence="2">
    <location>
        <begin position="301"/>
        <end position="306"/>
    </location>
</feature>
<feature type="domain" description="t-SNARE coiled-coil homology" evidence="3">
    <location>
        <begin position="204"/>
        <end position="266"/>
    </location>
</feature>
<feature type="region of interest" description="Required for the regulation of the defecation motor program" evidence="4">
    <location>
        <begin position="40"/>
        <end position="180"/>
    </location>
</feature>
<feature type="mutagenesis site" description="In tg94; severe reduction in anterior body wall muscle contraction (aBOC) and expulsion during the defecation motor program." evidence="4">
    <original>G</original>
    <variation>E</variation>
    <location>
        <position position="123"/>
    </location>
</feature>
<feature type="mutagenesis site" description="50 percent reduction in anterior body wall muscle contraction (aBOC) and expulsion during the defecation motor program." evidence="4">
    <original>IE</original>
    <variation>AA</variation>
    <location>
        <begin position="177"/>
        <end position="178"/>
    </location>
</feature>
<gene>
    <name evidence="6" type="primary">syx-3</name>
    <name evidence="6" type="synonym">syn-1</name>
    <name evidence="6" type="ORF">F35C8.4</name>
</gene>
<name>STX3_CAEEL</name>
<accession>Q20024</accession>
<keyword id="KW-1003">Cell membrane</keyword>
<keyword id="KW-0175">Coiled coil</keyword>
<keyword id="KW-0472">Membrane</keyword>
<keyword id="KW-0532">Neurotransmitter transport</keyword>
<keyword id="KW-1185">Reference proteome</keyword>
<keyword id="KW-0812">Transmembrane</keyword>
<keyword id="KW-1133">Transmembrane helix</keyword>
<keyword id="KW-0813">Transport</keyword>